<reference key="1">
    <citation type="submission" date="2006-03" db="EMBL/GenBank/DDBJ databases">
        <title>Complete sequence of Rhodopseudomonas palustris BisB5.</title>
        <authorList>
            <consortium name="US DOE Joint Genome Institute"/>
            <person name="Copeland A."/>
            <person name="Lucas S."/>
            <person name="Lapidus A."/>
            <person name="Barry K."/>
            <person name="Detter J.C."/>
            <person name="Glavina del Rio T."/>
            <person name="Hammon N."/>
            <person name="Israni S."/>
            <person name="Dalin E."/>
            <person name="Tice H."/>
            <person name="Pitluck S."/>
            <person name="Chain P."/>
            <person name="Malfatti S."/>
            <person name="Shin M."/>
            <person name="Vergez L."/>
            <person name="Schmutz J."/>
            <person name="Larimer F."/>
            <person name="Land M."/>
            <person name="Hauser L."/>
            <person name="Pelletier D.A."/>
            <person name="Kyrpides N."/>
            <person name="Lykidis A."/>
            <person name="Oda Y."/>
            <person name="Harwood C.S."/>
            <person name="Richardson P."/>
        </authorList>
    </citation>
    <scope>NUCLEOTIDE SEQUENCE [LARGE SCALE GENOMIC DNA]</scope>
    <source>
        <strain>BisB5</strain>
    </source>
</reference>
<sequence>MAIGKRLKKAREGVDRTKLYPLDEAVKMVKERATSKFDETIEVALNLGVDPRHADQMVRGVVMLPNGTGRTLRVGVFARGAKADEAKAAGADVVGAEDLVEQVQGGNINFDRCIATPDMMPLVGRLGKVLGPRGMMPNPKIGTVTMDVAGAVKGAKGGSVEFRVEKAGIVQAGVGKASFTEEKLVENIKALADAVTKAKPTGAKGTYIQRVAVSSSMGPGVKVEPGSIH</sequence>
<protein>
    <recommendedName>
        <fullName evidence="1">Large ribosomal subunit protein uL1</fullName>
    </recommendedName>
    <alternativeName>
        <fullName evidence="2">50S ribosomal protein L1</fullName>
    </alternativeName>
</protein>
<proteinExistence type="inferred from homology"/>
<feature type="chain" id="PRO_0000308090" description="Large ribosomal subunit protein uL1">
    <location>
        <begin position="1"/>
        <end position="229"/>
    </location>
</feature>
<name>RL1_RHOPS</name>
<organism>
    <name type="scientific">Rhodopseudomonas palustris (strain BisB5)</name>
    <dbReference type="NCBI Taxonomy" id="316057"/>
    <lineage>
        <taxon>Bacteria</taxon>
        <taxon>Pseudomonadati</taxon>
        <taxon>Pseudomonadota</taxon>
        <taxon>Alphaproteobacteria</taxon>
        <taxon>Hyphomicrobiales</taxon>
        <taxon>Nitrobacteraceae</taxon>
        <taxon>Rhodopseudomonas</taxon>
    </lineage>
</organism>
<keyword id="KW-0678">Repressor</keyword>
<keyword id="KW-0687">Ribonucleoprotein</keyword>
<keyword id="KW-0689">Ribosomal protein</keyword>
<keyword id="KW-0694">RNA-binding</keyword>
<keyword id="KW-0699">rRNA-binding</keyword>
<keyword id="KW-0810">Translation regulation</keyword>
<keyword id="KW-0820">tRNA-binding</keyword>
<gene>
    <name evidence="1" type="primary">rplA</name>
    <name type="ordered locus">RPD_3200</name>
</gene>
<evidence type="ECO:0000255" key="1">
    <source>
        <dbReference type="HAMAP-Rule" id="MF_01318"/>
    </source>
</evidence>
<evidence type="ECO:0000305" key="2"/>
<comment type="function">
    <text evidence="1">Binds directly to 23S rRNA. The L1 stalk is quite mobile in the ribosome, and is involved in E site tRNA release.</text>
</comment>
<comment type="function">
    <text evidence="1">Protein L1 is also a translational repressor protein, it controls the translation of the L11 operon by binding to its mRNA.</text>
</comment>
<comment type="subunit">
    <text evidence="1">Part of the 50S ribosomal subunit.</text>
</comment>
<comment type="similarity">
    <text evidence="1">Belongs to the universal ribosomal protein uL1 family.</text>
</comment>
<accession>Q134R4</accession>
<dbReference type="EMBL" id="CP000283">
    <property type="protein sequence ID" value="ABE40425.1"/>
    <property type="molecule type" value="Genomic_DNA"/>
</dbReference>
<dbReference type="SMR" id="Q134R4"/>
<dbReference type="STRING" id="316057.RPD_3200"/>
<dbReference type="KEGG" id="rpd:RPD_3200"/>
<dbReference type="eggNOG" id="COG0081">
    <property type="taxonomic scope" value="Bacteria"/>
</dbReference>
<dbReference type="HOGENOM" id="CLU_062853_0_0_5"/>
<dbReference type="BioCyc" id="RPAL316057:RPD_RS16060-MONOMER"/>
<dbReference type="Proteomes" id="UP000001818">
    <property type="component" value="Chromosome"/>
</dbReference>
<dbReference type="GO" id="GO:0022625">
    <property type="term" value="C:cytosolic large ribosomal subunit"/>
    <property type="evidence" value="ECO:0007669"/>
    <property type="project" value="TreeGrafter"/>
</dbReference>
<dbReference type="GO" id="GO:0019843">
    <property type="term" value="F:rRNA binding"/>
    <property type="evidence" value="ECO:0007669"/>
    <property type="project" value="UniProtKB-UniRule"/>
</dbReference>
<dbReference type="GO" id="GO:0003735">
    <property type="term" value="F:structural constituent of ribosome"/>
    <property type="evidence" value="ECO:0007669"/>
    <property type="project" value="InterPro"/>
</dbReference>
<dbReference type="GO" id="GO:0000049">
    <property type="term" value="F:tRNA binding"/>
    <property type="evidence" value="ECO:0007669"/>
    <property type="project" value="UniProtKB-KW"/>
</dbReference>
<dbReference type="GO" id="GO:0006417">
    <property type="term" value="P:regulation of translation"/>
    <property type="evidence" value="ECO:0007669"/>
    <property type="project" value="UniProtKB-KW"/>
</dbReference>
<dbReference type="GO" id="GO:0006412">
    <property type="term" value="P:translation"/>
    <property type="evidence" value="ECO:0007669"/>
    <property type="project" value="UniProtKB-UniRule"/>
</dbReference>
<dbReference type="CDD" id="cd00403">
    <property type="entry name" value="Ribosomal_L1"/>
    <property type="match status" value="1"/>
</dbReference>
<dbReference type="FunFam" id="3.40.50.790:FF:000001">
    <property type="entry name" value="50S ribosomal protein L1"/>
    <property type="match status" value="1"/>
</dbReference>
<dbReference type="Gene3D" id="3.30.190.20">
    <property type="match status" value="1"/>
</dbReference>
<dbReference type="Gene3D" id="3.40.50.790">
    <property type="match status" value="1"/>
</dbReference>
<dbReference type="HAMAP" id="MF_01318_B">
    <property type="entry name" value="Ribosomal_uL1_B"/>
    <property type="match status" value="1"/>
</dbReference>
<dbReference type="InterPro" id="IPR005878">
    <property type="entry name" value="Ribosom_uL1_bac-type"/>
</dbReference>
<dbReference type="InterPro" id="IPR002143">
    <property type="entry name" value="Ribosomal_uL1"/>
</dbReference>
<dbReference type="InterPro" id="IPR023674">
    <property type="entry name" value="Ribosomal_uL1-like"/>
</dbReference>
<dbReference type="InterPro" id="IPR028364">
    <property type="entry name" value="Ribosomal_uL1/biogenesis"/>
</dbReference>
<dbReference type="InterPro" id="IPR016095">
    <property type="entry name" value="Ribosomal_uL1_3-a/b-sand"/>
</dbReference>
<dbReference type="InterPro" id="IPR023673">
    <property type="entry name" value="Ribosomal_uL1_CS"/>
</dbReference>
<dbReference type="NCBIfam" id="TIGR01169">
    <property type="entry name" value="rplA_bact"/>
    <property type="match status" value="1"/>
</dbReference>
<dbReference type="PANTHER" id="PTHR36427">
    <property type="entry name" value="54S RIBOSOMAL PROTEIN L1, MITOCHONDRIAL"/>
    <property type="match status" value="1"/>
</dbReference>
<dbReference type="PANTHER" id="PTHR36427:SF3">
    <property type="entry name" value="LARGE RIBOSOMAL SUBUNIT PROTEIN UL1M"/>
    <property type="match status" value="1"/>
</dbReference>
<dbReference type="Pfam" id="PF00687">
    <property type="entry name" value="Ribosomal_L1"/>
    <property type="match status" value="1"/>
</dbReference>
<dbReference type="PIRSF" id="PIRSF002155">
    <property type="entry name" value="Ribosomal_L1"/>
    <property type="match status" value="1"/>
</dbReference>
<dbReference type="SUPFAM" id="SSF56808">
    <property type="entry name" value="Ribosomal protein L1"/>
    <property type="match status" value="1"/>
</dbReference>
<dbReference type="PROSITE" id="PS01199">
    <property type="entry name" value="RIBOSOMAL_L1"/>
    <property type="match status" value="1"/>
</dbReference>